<dbReference type="EMBL" id="L16945">
    <property type="protein sequence ID" value="AAC36848.1"/>
    <property type="molecule type" value="Unassigned_DNA"/>
</dbReference>
<dbReference type="EMBL" id="U82598">
    <property type="protein sequence ID" value="AAB40767.1"/>
    <property type="molecule type" value="Genomic_DNA"/>
</dbReference>
<dbReference type="EMBL" id="U00096">
    <property type="protein sequence ID" value="AAC73670.1"/>
    <property type="molecule type" value="Genomic_DNA"/>
</dbReference>
<dbReference type="EMBL" id="AP009048">
    <property type="protein sequence ID" value="BAA35203.1"/>
    <property type="molecule type" value="Genomic_DNA"/>
</dbReference>
<dbReference type="PIR" id="A49351">
    <property type="entry name" value="A49351"/>
</dbReference>
<dbReference type="RefSeq" id="NP_415101.1">
    <property type="nucleotide sequence ID" value="NC_000913.3"/>
</dbReference>
<dbReference type="SMR" id="P0AFA5"/>
<dbReference type="BioGRID" id="4262937">
    <property type="interactions" value="96"/>
</dbReference>
<dbReference type="DIP" id="DIP-10333N"/>
<dbReference type="FunCoup" id="P0AFA5">
    <property type="interactions" value="85"/>
</dbReference>
<dbReference type="IntAct" id="P0AFA5">
    <property type="interactions" value="2"/>
</dbReference>
<dbReference type="STRING" id="511145.b0569"/>
<dbReference type="PaxDb" id="511145-b0569"/>
<dbReference type="EnsemblBacteria" id="AAC73670">
    <property type="protein sequence ID" value="AAC73670"/>
    <property type="gene ID" value="b0569"/>
</dbReference>
<dbReference type="GeneID" id="945849"/>
<dbReference type="KEGG" id="ecj:JW0558"/>
<dbReference type="KEGG" id="eco:b0569"/>
<dbReference type="KEGG" id="ecoc:C3026_02825"/>
<dbReference type="PATRIC" id="fig|1411691.4.peg.1705"/>
<dbReference type="EchoBASE" id="EB1690"/>
<dbReference type="eggNOG" id="COG1215">
    <property type="taxonomic scope" value="Bacteria"/>
</dbReference>
<dbReference type="HOGENOM" id="CLU_019733_1_0_6"/>
<dbReference type="InParanoid" id="P0AFA5"/>
<dbReference type="OMA" id="KTMHDFP"/>
<dbReference type="OrthoDB" id="5294733at2"/>
<dbReference type="PhylomeDB" id="P0AFA5"/>
<dbReference type="BioCyc" id="EcoCyc:EG11739-MONOMER"/>
<dbReference type="PRO" id="PR:P0AFA5"/>
<dbReference type="Proteomes" id="UP000000625">
    <property type="component" value="Chromosome"/>
</dbReference>
<dbReference type="GO" id="GO:0005886">
    <property type="term" value="C:plasma membrane"/>
    <property type="evidence" value="ECO:0000314"/>
    <property type="project" value="EcoCyc"/>
</dbReference>
<dbReference type="GO" id="GO:0015627">
    <property type="term" value="C:type II protein secretion system complex"/>
    <property type="evidence" value="ECO:0000318"/>
    <property type="project" value="GO_Central"/>
</dbReference>
<dbReference type="GO" id="GO:0016887">
    <property type="term" value="F:ATP hydrolysis activity"/>
    <property type="evidence" value="ECO:0000318"/>
    <property type="project" value="GO_Central"/>
</dbReference>
<dbReference type="GO" id="GO:0035438">
    <property type="term" value="F:cyclic-di-GMP binding"/>
    <property type="evidence" value="ECO:0000314"/>
    <property type="project" value="EcoCyc"/>
</dbReference>
<dbReference type="GO" id="GO:0016757">
    <property type="term" value="F:glycosyltransferase activity"/>
    <property type="evidence" value="ECO:0000255"/>
    <property type="project" value="EcoCyc"/>
</dbReference>
<dbReference type="GO" id="GO:0015628">
    <property type="term" value="P:protein secretion by the type II secretion system"/>
    <property type="evidence" value="ECO:0000318"/>
    <property type="project" value="GO_Central"/>
</dbReference>
<dbReference type="FunFam" id="3.30.300.160:FF:000001">
    <property type="entry name" value="Bacteriophage N4 adsorption protein B"/>
    <property type="match status" value="1"/>
</dbReference>
<dbReference type="FunFam" id="3.90.550.10:FF:000103">
    <property type="entry name" value="Bacteriophage N4 adsorption protein B"/>
    <property type="match status" value="1"/>
</dbReference>
<dbReference type="Gene3D" id="3.90.550.10">
    <property type="entry name" value="Spore Coat Polysaccharide Biosynthesis Protein SpsA, Chain A"/>
    <property type="match status" value="1"/>
</dbReference>
<dbReference type="Gene3D" id="3.30.300.160">
    <property type="entry name" value="Type II secretion system, protein E, N-terminal domain"/>
    <property type="match status" value="1"/>
</dbReference>
<dbReference type="InterPro" id="IPR001173">
    <property type="entry name" value="Glyco_trans_2-like"/>
</dbReference>
<dbReference type="InterPro" id="IPR029044">
    <property type="entry name" value="Nucleotide-diphossugar_trans"/>
</dbReference>
<dbReference type="InterPro" id="IPR037257">
    <property type="entry name" value="T2SS_E_N_sf"/>
</dbReference>
<dbReference type="InterPro" id="IPR007831">
    <property type="entry name" value="T2SS_GspE_N"/>
</dbReference>
<dbReference type="NCBIfam" id="NF008411">
    <property type="entry name" value="PRK11234.1"/>
    <property type="match status" value="1"/>
</dbReference>
<dbReference type="NCBIfam" id="NF011305">
    <property type="entry name" value="PRK14716.1-3"/>
    <property type="match status" value="1"/>
</dbReference>
<dbReference type="NCBIfam" id="NF012033">
    <property type="entry name" value="PRK15489.1"/>
    <property type="match status" value="1"/>
</dbReference>
<dbReference type="PANTHER" id="PTHR30258:SF1">
    <property type="entry name" value="PROTEIN TRANSPORT PROTEIN HOFB HOMOLOG"/>
    <property type="match status" value="1"/>
</dbReference>
<dbReference type="PANTHER" id="PTHR30258">
    <property type="entry name" value="TYPE II SECRETION SYSTEM PROTEIN GSPE-RELATED"/>
    <property type="match status" value="1"/>
</dbReference>
<dbReference type="Pfam" id="PF13632">
    <property type="entry name" value="Glyco_trans_2_3"/>
    <property type="match status" value="1"/>
</dbReference>
<dbReference type="Pfam" id="PF05157">
    <property type="entry name" value="MshEN"/>
    <property type="match status" value="1"/>
</dbReference>
<dbReference type="SUPFAM" id="SSF160246">
    <property type="entry name" value="EspE N-terminal domain-like"/>
    <property type="match status" value="1"/>
</dbReference>
<dbReference type="SUPFAM" id="SSF53448">
    <property type="entry name" value="Nucleotide-diphospho-sugar transferases"/>
    <property type="match status" value="1"/>
</dbReference>
<protein>
    <recommendedName>
        <fullName evidence="3">Bacteriophage adsorption protein B</fullName>
    </recommendedName>
    <alternativeName>
        <fullName>Bacteriophage N4 adsorption protein B</fullName>
    </alternativeName>
</protein>
<accession>P0AFA5</accession>
<accession>P31599</accession>
<comment type="function">
    <text>Required for bacteriophage N4 adsorption. May be a component of the phage receptor.</text>
</comment>
<comment type="subcellular location">
    <subcellularLocation>
        <location evidence="2">Cell inner membrane</location>
        <topology evidence="2">Multi-pass membrane protein</topology>
    </subcellularLocation>
</comment>
<evidence type="ECO:0000255" key="1"/>
<evidence type="ECO:0000269" key="2">
    <source>
    </source>
</evidence>
<evidence type="ECO:0000305" key="3"/>
<keyword id="KW-0997">Cell inner membrane</keyword>
<keyword id="KW-1003">Cell membrane</keyword>
<keyword id="KW-0472">Membrane</keyword>
<keyword id="KW-1185">Reference proteome</keyword>
<keyword id="KW-0812">Transmembrane</keyword>
<keyword id="KW-1133">Transmembrane helix</keyword>
<gene>
    <name type="primary">nfrB</name>
    <name type="ordered locus">b0569</name>
    <name type="ordered locus">JW0558</name>
</gene>
<name>NFRB_ECOLI</name>
<feature type="chain" id="PRO_0000096796" description="Bacteriophage adsorption protein B">
    <location>
        <begin position="1"/>
        <end position="745"/>
    </location>
</feature>
<feature type="transmembrane region" description="Helical" evidence="1">
    <location>
        <begin position="8"/>
        <end position="28"/>
    </location>
</feature>
<feature type="transmembrane region" description="Helical" evidence="1">
    <location>
        <begin position="362"/>
        <end position="382"/>
    </location>
</feature>
<feature type="transmembrane region" description="Helical" evidence="1">
    <location>
        <begin position="393"/>
        <end position="413"/>
    </location>
</feature>
<proteinExistence type="predicted"/>
<organism>
    <name type="scientific">Escherichia coli (strain K12)</name>
    <dbReference type="NCBI Taxonomy" id="83333"/>
    <lineage>
        <taxon>Bacteria</taxon>
        <taxon>Pseudomonadati</taxon>
        <taxon>Pseudomonadota</taxon>
        <taxon>Gammaproteobacteria</taxon>
        <taxon>Enterobacterales</taxon>
        <taxon>Enterobacteriaceae</taxon>
        <taxon>Escherichia</taxon>
    </lineage>
</organism>
<sequence>MDWLLDVFATWLYGLKVIAITLAVIMFISGLDDFFIDVVYWVRRIKRKLSVYRRYPRMSYRELYKPDEKPLAIMVPAWNETGVIGNMAELAATTLDYENYHIFVGTYPNDPDTQRDVDEVCARFPNVHKVVCARPGPTSKADCLNNVLDAITQFERSANFAFAGFILHDAEDVISPMELRLFNYLVERKDLIQIPVYPFEREWTHFTSMTYIDEFSELHGKDVPVREALAGQVPSAGVGTCFSRRAVTALLADGDGIAFDVQSLTEDYDIGFRLKEKGMTEIFVRFPVVDEAKEREQRKFLQHARTSNMICVREYFPDTFSTAVRQKSRWIIGIVFQGFKTHKWTSSLTLNYFLWRDRKGAISNFVSFLAMLVMIQLLLLLAYESLWPDAWHFLSIFSGSAWLMTLLWLNFGLMVNRIVQRVIFVTGYYGLTQGLLSVLRLFWGNLINFMANWRALKQVLQHGDPRRVAWDKTTHDFPSVTGDTRSLRPLGQILLENQVITEEQLDTALRNRVEGLRLGGSMLMQGLISAEQLAQALAEQNGVAWESIDAWQIPSSLIAEMPASVALHYAVLPLRLENDELIVGSEDGIDPVSLAALTRKVGRKVRYVIVLRGQIVTGLRHWYARRRGHDPRAMLYNAVQHQWLTEQQAGEIWRQYVPHQFLFAEILTTLGHINRSAINVLLLRHERSSLPLGKFLVTEGVISQETLDRVLTIQRELQVSMQSLLLKAGLNTEQVAQLESENEGE</sequence>
<reference key="1">
    <citation type="journal article" date="1993" name="J. Bacteriol.">
        <title>Two overlapping genes encoding membrane proteins required for bacteriophage N4 adsorption.</title>
        <authorList>
            <person name="Kiino D.R."/>
            <person name="Singer M.S."/>
            <person name="Rothman-Denes L.B."/>
        </authorList>
    </citation>
    <scope>NUCLEOTIDE SEQUENCE [GENOMIC DNA]</scope>
    <source>
        <strain>K12</strain>
    </source>
</reference>
<reference key="2">
    <citation type="journal article" date="1996" name="DNA Res.">
        <title>A 718-kb DNA sequence of the Escherichia coli K-12 genome corresponding to the 12.7-28.0 min region on the linkage map.</title>
        <authorList>
            <person name="Oshima T."/>
            <person name="Aiba H."/>
            <person name="Baba T."/>
            <person name="Fujita K."/>
            <person name="Hayashi K."/>
            <person name="Honjo A."/>
            <person name="Ikemoto K."/>
            <person name="Inada T."/>
            <person name="Itoh T."/>
            <person name="Kajihara M."/>
            <person name="Kanai K."/>
            <person name="Kashimoto K."/>
            <person name="Kimura S."/>
            <person name="Kitagawa M."/>
            <person name="Makino K."/>
            <person name="Masuda S."/>
            <person name="Miki T."/>
            <person name="Mizobuchi K."/>
            <person name="Mori H."/>
            <person name="Motomura K."/>
            <person name="Nakamura Y."/>
            <person name="Nashimoto H."/>
            <person name="Nishio Y."/>
            <person name="Saito N."/>
            <person name="Sampei G."/>
            <person name="Seki Y."/>
            <person name="Tagami H."/>
            <person name="Takemoto K."/>
            <person name="Wada C."/>
            <person name="Yamamoto Y."/>
            <person name="Yano M."/>
            <person name="Horiuchi T."/>
        </authorList>
    </citation>
    <scope>NUCLEOTIDE SEQUENCE [LARGE SCALE GENOMIC DNA]</scope>
    <source>
        <strain>K12 / W3110 / ATCC 27325 / DSM 5911</strain>
    </source>
</reference>
<reference key="3">
    <citation type="submission" date="1997-01" db="EMBL/GenBank/DDBJ databases">
        <title>Sequence of minutes 4-25 of Escherichia coli.</title>
        <authorList>
            <person name="Chung E."/>
            <person name="Allen E."/>
            <person name="Araujo R."/>
            <person name="Aparicio A.M."/>
            <person name="Davis K."/>
            <person name="Duncan M."/>
            <person name="Federspiel N."/>
            <person name="Hyman R."/>
            <person name="Kalman S."/>
            <person name="Komp C."/>
            <person name="Kurdi O."/>
            <person name="Lew H."/>
            <person name="Lin D."/>
            <person name="Namath A."/>
            <person name="Oefner P."/>
            <person name="Roberts D."/>
            <person name="Schramm S."/>
            <person name="Davis R.W."/>
        </authorList>
    </citation>
    <scope>NUCLEOTIDE SEQUENCE [LARGE SCALE GENOMIC DNA]</scope>
    <source>
        <strain>K12 / MG1655 / ATCC 47076</strain>
    </source>
</reference>
<reference key="4">
    <citation type="journal article" date="1997" name="Science">
        <title>The complete genome sequence of Escherichia coli K-12.</title>
        <authorList>
            <person name="Blattner F.R."/>
            <person name="Plunkett G. III"/>
            <person name="Bloch C.A."/>
            <person name="Perna N.T."/>
            <person name="Burland V."/>
            <person name="Riley M."/>
            <person name="Collado-Vides J."/>
            <person name="Glasner J.D."/>
            <person name="Rode C.K."/>
            <person name="Mayhew G.F."/>
            <person name="Gregor J."/>
            <person name="Davis N.W."/>
            <person name="Kirkpatrick H.A."/>
            <person name="Goeden M.A."/>
            <person name="Rose D.J."/>
            <person name="Mau B."/>
            <person name="Shao Y."/>
        </authorList>
    </citation>
    <scope>NUCLEOTIDE SEQUENCE [LARGE SCALE GENOMIC DNA]</scope>
    <source>
        <strain>K12 / MG1655 / ATCC 47076</strain>
    </source>
</reference>
<reference key="5">
    <citation type="journal article" date="2006" name="Mol. Syst. Biol.">
        <title>Highly accurate genome sequences of Escherichia coli K-12 strains MG1655 and W3110.</title>
        <authorList>
            <person name="Hayashi K."/>
            <person name="Morooka N."/>
            <person name="Yamamoto Y."/>
            <person name="Fujita K."/>
            <person name="Isono K."/>
            <person name="Choi S."/>
            <person name="Ohtsubo E."/>
            <person name="Baba T."/>
            <person name="Wanner B.L."/>
            <person name="Mori H."/>
            <person name="Horiuchi T."/>
        </authorList>
    </citation>
    <scope>NUCLEOTIDE SEQUENCE [LARGE SCALE GENOMIC DNA]</scope>
    <source>
        <strain>K12 / W3110 / ATCC 27325 / DSM 5911</strain>
    </source>
</reference>
<reference key="6">
    <citation type="journal article" date="2005" name="Science">
        <title>Global topology analysis of the Escherichia coli inner membrane proteome.</title>
        <authorList>
            <person name="Daley D.O."/>
            <person name="Rapp M."/>
            <person name="Granseth E."/>
            <person name="Melen K."/>
            <person name="Drew D."/>
            <person name="von Heijne G."/>
        </authorList>
    </citation>
    <scope>SUBCELLULAR LOCATION</scope>
    <source>
        <strain>K12 / MG1655 / ATCC 47076</strain>
    </source>
</reference>